<organismHost>
    <name type="scientific">Salmonella typhimurium</name>
    <dbReference type="NCBI Taxonomy" id="90371"/>
</organismHost>
<gene>
    <name type="primary">4</name>
</gene>
<comment type="function">
    <text evidence="2 3 4">Tail protein that binds the portal ring and functions as a head completion protein. 12 copies of gp4 form a structural ring at the bottom of the portal ring. Together with gp10 and gp26, gp4 is required for stabilization of the condensed DNA within the capsid; perhaps by plugging the hole through which the DNA enters. Plays a role in ejection of the bacteriophage DNA into the host cell at the initiation of infection. Functions as an exolysin that catalyzes the cleavage of the glycosidic bonds between N-acetylmuramic acid and N-acetylglucosamine residues in peptidoglycans.</text>
</comment>
<comment type="subunit">
    <text evidence="3 5 6">Monomer; homododecamer upon binding to the portal ring (PubMed:16970964). Interacts (via C-terminus) with the portal protein; this interaction participates in the head completion (PubMed:16970964, PubMed:28134243, PubMed:37952769). Interacts with the Tail hub protein gp10 (PubMed:37952769). Interacts with the tail needle protein gp26 (PubMed:37952769).</text>
</comment>
<comment type="subcellular location">
    <subcellularLocation>
        <location evidence="6">Virion</location>
    </subcellularLocation>
</comment>
<comment type="domain">
    <text evidence="1">The N-terminus changes its conformation when transitioning from the preassembly state to the postassembly state.</text>
</comment>
<accession>P26746</accession>
<accession>Q7PCI3</accession>
<organism>
    <name type="scientific">Salmonella phage P22</name>
    <name type="common">Bacteriophage P22</name>
    <dbReference type="NCBI Taxonomy" id="10754"/>
    <lineage>
        <taxon>Viruses</taxon>
        <taxon>Duplodnaviria</taxon>
        <taxon>Heunggongvirae</taxon>
        <taxon>Uroviricota</taxon>
        <taxon>Caudoviricetes</taxon>
        <taxon>Lederbergvirus</taxon>
    </lineage>
</organism>
<protein>
    <recommendedName>
        <fullName>Head-to-tail adapter protein gp4</fullName>
    </recommendedName>
    <alternativeName>
        <fullName>Gene product 4</fullName>
        <shortName>Gp4</shortName>
    </alternativeName>
    <alternativeName>
        <fullName>Internal virion protein gp4</fullName>
    </alternativeName>
    <alternativeName>
        <fullName>Peptidoglycan hydrolase gp4</fullName>
    </alternativeName>
    <alternativeName>
        <fullName>Tail adapter protein gp4</fullName>
    </alternativeName>
</protein>
<keyword id="KW-0002">3D-structure</keyword>
<keyword id="KW-1235">Degradation of host cell envelope components during virus entry</keyword>
<keyword id="KW-1236">Degradation of host peptidoglycans during virus entry</keyword>
<keyword id="KW-0903">Direct protein sequencing</keyword>
<keyword id="KW-0378">Hydrolase</keyword>
<keyword id="KW-0426">Late protein</keyword>
<keyword id="KW-0456">Lyase</keyword>
<keyword id="KW-1185">Reference proteome</keyword>
<keyword id="KW-1171">Viral genome ejection through host cell envelope</keyword>
<keyword id="KW-1162">Viral penetration into host cytoplasm</keyword>
<keyword id="KW-1244">Viral short tail ejection system</keyword>
<keyword id="KW-0946">Virion</keyword>
<keyword id="KW-1160">Virus entry into host cell</keyword>
<evidence type="ECO:0000250" key="1">
    <source>
        <dbReference type="UniProtKB" id="Q716G8"/>
    </source>
</evidence>
<evidence type="ECO:0000269" key="2">
    <source>
    </source>
</evidence>
<evidence type="ECO:0000269" key="3">
    <source>
    </source>
</evidence>
<evidence type="ECO:0000269" key="4">
    <source>
    </source>
</evidence>
<evidence type="ECO:0000269" key="5">
    <source>
    </source>
</evidence>
<evidence type="ECO:0000269" key="6">
    <source>
    </source>
</evidence>
<evidence type="ECO:0007744" key="7">
    <source>
        <dbReference type="PDB" id="4V4K"/>
    </source>
</evidence>
<evidence type="ECO:0007744" key="8">
    <source>
        <dbReference type="PDB" id="8TVU"/>
    </source>
</evidence>
<evidence type="ECO:0007744" key="9">
    <source>
        <dbReference type="PDB" id="8U10"/>
    </source>
</evidence>
<evidence type="ECO:0007744" key="10">
    <source>
        <dbReference type="PDB" id="8U11"/>
    </source>
</evidence>
<evidence type="ECO:0007829" key="11">
    <source>
        <dbReference type="PDB" id="8TVU"/>
    </source>
</evidence>
<name>EXLYS_BPP22</name>
<sequence length="166" mass="18025">MQIKTKGDLVRAALRKLGVASDATLTDVEPQSMQDAVDDLEAMMAEWYQDGKGIITGYVFSDDENPPAEGDDHGLRSSAVSAVFHNLACRIAPDYALEATAKIIATAKYGKELLYKQTAISRAKRAPYPSRMPTGSGNSFANLNEWHYFPGEQNADSTTPHDEGNG</sequence>
<proteinExistence type="evidence at protein level"/>
<reference key="1">
    <citation type="journal article" date="1991" name="Virology">
        <title>Nucleotide sequence of the bacteriophage P22 genes required for DNA packaging.</title>
        <authorList>
            <person name="Eppler K."/>
            <person name="Wyckoff E."/>
            <person name="Goates J."/>
            <person name="Parr R."/>
            <person name="Casjens S."/>
        </authorList>
    </citation>
    <scope>NUCLEOTIDE SEQUENCE [GENOMIC DNA]</scope>
    <scope>PROTEIN SEQUENCE OF 1-17</scope>
</reference>
<reference key="2">
    <citation type="journal article" date="2000" name="J. Bacteriol.">
        <title>Sequence of the genome of Salmonella bacteriophage P22.</title>
        <authorList>
            <person name="Vander Byl C.S."/>
            <person name="Kropinski A.M.B."/>
        </authorList>
    </citation>
    <scope>NUCLEOTIDE SEQUENCE [LARGE SCALE GENOMIC DNA]</scope>
</reference>
<reference key="3">
    <citation type="journal article" date="2003" name="J. Bacteriol.">
        <title>Corrected sequence of the bacteriophage P22 genome.</title>
        <authorList>
            <person name="Pedulla M.L."/>
            <person name="Ford M.E."/>
            <person name="Karthikeyan T."/>
            <person name="Houtz J.M."/>
            <person name="Hendrix R.W."/>
            <person name="Hatfull G.F."/>
            <person name="Poteete A.R."/>
            <person name="Gilcrease E.B."/>
            <person name="Winn-Stapley D.A."/>
            <person name="Casjens S.R."/>
        </authorList>
    </citation>
    <scope>NUCLEOTIDE SEQUENCE [LARGE SCALE GENOMIC DNA]</scope>
</reference>
<reference key="4">
    <citation type="journal article" date="2004" name="Mol. Microbiol.">
        <title>Peptidoglycan hydrolytic activities associated with bacteriophage virions.</title>
        <authorList>
            <person name="Moak M."/>
            <person name="Molineux I.J."/>
        </authorList>
    </citation>
    <scope>FUNCTION</scope>
    <scope>PROTEIN SEQUENCE OF 1-14</scope>
    <scope>CATALYTIC ACTIVITY</scope>
</reference>
<reference key="5">
    <citation type="journal article" date="2006" name="J. Mol. Biol.">
        <title>Binding-induced stabilization and assembly of the phage P22 tail accessory factor gp4.</title>
        <authorList>
            <person name="Olia A.S."/>
            <person name="Al-Bassam J."/>
            <person name="Winn-Stapley D.A."/>
            <person name="Joss L."/>
            <person name="Casjens S.R."/>
            <person name="Cingolani G."/>
        </authorList>
    </citation>
    <scope>FUNCTION</scope>
    <scope>SUBUNIT</scope>
    <scope>INTERACTION WITH THE PORTAL PROTEIN</scope>
</reference>
<reference key="6">
    <citation type="journal article" date="2017" name="Nat. Commun.">
        <title>Portal protein functions akin to a DNA-sensor that couples genome-packaging to icosahedral capsid maturation.</title>
        <authorList>
            <person name="Lokareddy R.K."/>
            <person name="Sankhala R.S."/>
            <person name="Roy A."/>
            <person name="Afonine P.V."/>
            <person name="Motwani T."/>
            <person name="Teschke C.M."/>
            <person name="Parent K.N."/>
            <person name="Cingolani G."/>
        </authorList>
    </citation>
    <scope>INTERACTION WITH THE PORTAL PROTEIN</scope>
</reference>
<reference evidence="7" key="7">
    <citation type="journal article" date="2011" name="Nat. Struct. Mol. Biol.">
        <title>Three-dimensional structure of a viral genome-delivery portal vertex.</title>
        <authorList>
            <person name="Olia A.S."/>
            <person name="Prevelige P.E. Jr."/>
            <person name="Johnson J.E."/>
            <person name="Cingolani G."/>
        </authorList>
    </citation>
    <scope>X-RAY CRYSTALLOGRAPHY (3.25 ANGSTROMS)</scope>
</reference>
<reference evidence="8 9 10" key="8">
    <citation type="journal article" date="2023" name="J. Mol. Biol.">
        <title>Molecular Architecture of Salmonella Typhimurium Virus P22 Genome Ejection Machinery.</title>
        <authorList>
            <person name="Iglesias S.M."/>
            <person name="Lokareddy R.K."/>
            <person name="Yang R."/>
            <person name="Li F."/>
            <person name="Yeggoni D.P."/>
            <person name="David Hou C.F."/>
            <person name="Leroux M.N."/>
            <person name="Cortines J.R."/>
            <person name="Leavitt J.C."/>
            <person name="Bird M."/>
            <person name="Casjens S.R."/>
            <person name="White S."/>
            <person name="Teschke C.M."/>
            <person name="Cingolani G."/>
        </authorList>
    </citation>
    <scope>STRUCTURE BY ELECTRON MICROSCOPY (3.00 ANGSTROMS)</scope>
    <scope>SUBCELLULAR LOCATION</scope>
    <scope>INTERACTION WITH THE PORTAL PROTEIN</scope>
    <scope>INTERACTION WITH THE TAIL HUB PROTEIN GP10</scope>
    <scope>INTERACTION WITH THE TAIL SPIKE PROTEIN GP9</scope>
</reference>
<feature type="chain" id="PRO_0000077750" description="Head-to-tail adapter protein gp4">
    <location>
        <begin position="1"/>
        <end position="166"/>
    </location>
</feature>
<feature type="helix" evidence="11">
    <location>
        <begin position="6"/>
        <end position="16"/>
    </location>
</feature>
<feature type="strand" evidence="11">
    <location>
        <begin position="22"/>
        <end position="25"/>
    </location>
</feature>
<feature type="helix" evidence="11">
    <location>
        <begin position="30"/>
        <end position="47"/>
    </location>
</feature>
<feature type="strand" evidence="11">
    <location>
        <begin position="63"/>
        <end position="66"/>
    </location>
</feature>
<feature type="helix" evidence="11">
    <location>
        <begin position="77"/>
        <end position="79"/>
    </location>
</feature>
<feature type="helix" evidence="11">
    <location>
        <begin position="80"/>
        <end position="91"/>
    </location>
</feature>
<feature type="helix" evidence="11">
    <location>
        <begin position="92"/>
        <end position="95"/>
    </location>
</feature>
<feature type="helix" evidence="11">
    <location>
        <begin position="101"/>
        <end position="121"/>
    </location>
</feature>
<feature type="helix" evidence="11">
    <location>
        <begin position="139"/>
        <end position="143"/>
    </location>
</feature>
<dbReference type="EMBL" id="M59749">
    <property type="protein sequence ID" value="AAA72964.1"/>
    <property type="molecule type" value="Genomic_DNA"/>
</dbReference>
<dbReference type="EMBL" id="AF217253">
    <property type="protein sequence ID" value="AAF75049.1"/>
    <property type="molecule type" value="Genomic_DNA"/>
</dbReference>
<dbReference type="EMBL" id="BK000583">
    <property type="protein sequence ID" value="DAA00989.1"/>
    <property type="molecule type" value="Genomic_DNA"/>
</dbReference>
<dbReference type="PIR" id="F40474">
    <property type="entry name" value="Z4BP22"/>
</dbReference>
<dbReference type="RefSeq" id="NP_059632.1">
    <property type="nucleotide sequence ID" value="NC_002371.2"/>
</dbReference>
<dbReference type="PDB" id="4V4K">
    <property type="method" value="X-ray"/>
    <property type="resolution" value="3.25 A"/>
    <property type="chains" value="Y/Z/a/b/c/d/e/f/g/h/i/j/k/l/m/n/o/p/q/r/s/t/u/v=1-166"/>
</dbReference>
<dbReference type="PDB" id="5GAI">
    <property type="method" value="EM"/>
    <property type="resolution" value="10.50 A"/>
    <property type="chains" value="K/L/M/N/O/P/Q/R/S/T/U/V=5-150"/>
</dbReference>
<dbReference type="PDB" id="8EAO">
    <property type="method" value="EM"/>
    <property type="resolution" value="3.20 A"/>
    <property type="chains" value="A/C/E/G/I/K/M/O/Q/S/U/W=3-151"/>
</dbReference>
<dbReference type="PDB" id="8EB7">
    <property type="method" value="EM"/>
    <property type="resolution" value="3.80 A"/>
    <property type="chains" value="E/G/H/I/J/K/L/M/N/O/P/Q=2-151"/>
</dbReference>
<dbReference type="PDB" id="8TVU">
    <property type="method" value="EM"/>
    <property type="resolution" value="3.00 A"/>
    <property type="chains" value="C/E/G/I/K/M/O/Q/S/V/X/a=1-166"/>
</dbReference>
<dbReference type="PDB" id="8U10">
    <property type="method" value="EM"/>
    <property type="resolution" value="3.20 A"/>
    <property type="chains" value="m/n/o/p/q/r/s/t/u/v/x/y=1-166"/>
</dbReference>
<dbReference type="PDB" id="8U11">
    <property type="method" value="EM"/>
    <property type="resolution" value="3.10 A"/>
    <property type="chains" value="m/n/o/p/q/r/s/t/u/v/x/y=1-166"/>
</dbReference>
<dbReference type="PDBsum" id="4V4K"/>
<dbReference type="PDBsum" id="5GAI"/>
<dbReference type="PDBsum" id="8EAO"/>
<dbReference type="PDBsum" id="8EB7"/>
<dbReference type="PDBsum" id="8TVU"/>
<dbReference type="PDBsum" id="8U10"/>
<dbReference type="PDBsum" id="8U11"/>
<dbReference type="EMDB" id="EMD-41651"/>
<dbReference type="EMDB" id="EMD-41791"/>
<dbReference type="EMDB" id="EMD-41792"/>
<dbReference type="EMDB" id="EMD-8005"/>
<dbReference type="SMR" id="P26746"/>
<dbReference type="DIP" id="DIP-59582N"/>
<dbReference type="IntAct" id="P26746">
    <property type="interactions" value="1"/>
</dbReference>
<dbReference type="GeneID" id="1262828"/>
<dbReference type="KEGG" id="vg:1262828"/>
<dbReference type="OrthoDB" id="10181at10239"/>
<dbReference type="EvolutionaryTrace" id="P26746"/>
<dbReference type="Proteomes" id="UP000001795">
    <property type="component" value="Segment"/>
</dbReference>
<dbReference type="Proteomes" id="UP000007960">
    <property type="component" value="Segment"/>
</dbReference>
<dbReference type="GO" id="GO:0098015">
    <property type="term" value="C:virus tail"/>
    <property type="evidence" value="ECO:0000314"/>
    <property type="project" value="CACAO"/>
</dbReference>
<dbReference type="GO" id="GO:0016787">
    <property type="term" value="F:hydrolase activity"/>
    <property type="evidence" value="ECO:0007669"/>
    <property type="project" value="UniProtKB-KW"/>
</dbReference>
<dbReference type="GO" id="GO:0098994">
    <property type="term" value="P:symbiont entry into host cell via disruption of host cell envelope"/>
    <property type="evidence" value="ECO:0007669"/>
    <property type="project" value="UniProtKB-KW"/>
</dbReference>
<dbReference type="GO" id="GO:0098932">
    <property type="term" value="P:symbiont entry into host cell via disruption of host cell wall peptidoglycan"/>
    <property type="evidence" value="ECO:0000314"/>
    <property type="project" value="UniProtKB"/>
</dbReference>
<dbReference type="GO" id="GO:0099002">
    <property type="term" value="P:symbiont genome ejection through host cell envelope, short tail mechanism"/>
    <property type="evidence" value="ECO:0000314"/>
    <property type="project" value="UniProtKB"/>
</dbReference>
<dbReference type="FunFam" id="1.10.3230.20:FF:000001">
    <property type="entry name" value="DNA stabilization, phage-associated"/>
    <property type="match status" value="1"/>
</dbReference>
<dbReference type="Gene3D" id="1.10.3230.20">
    <property type="entry name" value="P22 tail accessory factor (Gp4)"/>
    <property type="match status" value="1"/>
</dbReference>
<dbReference type="InterPro" id="IPR038258">
    <property type="entry name" value="Gp4_sf"/>
</dbReference>
<dbReference type="InterPro" id="IPR020362">
    <property type="entry name" value="Tail_accessory_Gp4"/>
</dbReference>
<dbReference type="Pfam" id="PF11650">
    <property type="entry name" value="P22_Tail-4"/>
    <property type="match status" value="1"/>
</dbReference>